<name>RS211_RHIJ3</name>
<reference key="1">
    <citation type="journal article" date="2006" name="Genome Biol.">
        <title>The genome of Rhizobium leguminosarum has recognizable core and accessory components.</title>
        <authorList>
            <person name="Young J.P.W."/>
            <person name="Crossman L.C."/>
            <person name="Johnston A.W.B."/>
            <person name="Thomson N.R."/>
            <person name="Ghazoui Z.F."/>
            <person name="Hull K.H."/>
            <person name="Wexler M."/>
            <person name="Curson A.R.J."/>
            <person name="Todd J.D."/>
            <person name="Poole P.S."/>
            <person name="Mauchline T.H."/>
            <person name="East A.K."/>
            <person name="Quail M.A."/>
            <person name="Churcher C."/>
            <person name="Arrowsmith C."/>
            <person name="Cherevach I."/>
            <person name="Chillingworth T."/>
            <person name="Clarke K."/>
            <person name="Cronin A."/>
            <person name="Davis P."/>
            <person name="Fraser A."/>
            <person name="Hance Z."/>
            <person name="Hauser H."/>
            <person name="Jagels K."/>
            <person name="Moule S."/>
            <person name="Mungall K."/>
            <person name="Norbertczak H."/>
            <person name="Rabbinowitsch E."/>
            <person name="Sanders M."/>
            <person name="Simmonds M."/>
            <person name="Whitehead S."/>
            <person name="Parkhill J."/>
        </authorList>
    </citation>
    <scope>NUCLEOTIDE SEQUENCE [LARGE SCALE GENOMIC DNA]</scope>
    <source>
        <strain>DSM 114642 / LMG 32736 / 3841</strain>
    </source>
</reference>
<proteinExistence type="inferred from homology"/>
<gene>
    <name evidence="1" type="primary">rpsU1</name>
    <name type="ordered locus">RL1300</name>
</gene>
<dbReference type="EMBL" id="AM236080">
    <property type="protein sequence ID" value="CAK06796.1"/>
    <property type="molecule type" value="Genomic_DNA"/>
</dbReference>
<dbReference type="SMR" id="Q1MJR4"/>
<dbReference type="EnsemblBacteria" id="CAK06796">
    <property type="protein sequence ID" value="CAK06796"/>
    <property type="gene ID" value="RL1300"/>
</dbReference>
<dbReference type="KEGG" id="rle:RL1300"/>
<dbReference type="eggNOG" id="COG0828">
    <property type="taxonomic scope" value="Bacteria"/>
</dbReference>
<dbReference type="HOGENOM" id="CLU_159258_0_1_5"/>
<dbReference type="Proteomes" id="UP000006575">
    <property type="component" value="Chromosome"/>
</dbReference>
<dbReference type="GO" id="GO:1990904">
    <property type="term" value="C:ribonucleoprotein complex"/>
    <property type="evidence" value="ECO:0007669"/>
    <property type="project" value="UniProtKB-KW"/>
</dbReference>
<dbReference type="GO" id="GO:0005840">
    <property type="term" value="C:ribosome"/>
    <property type="evidence" value="ECO:0007669"/>
    <property type="project" value="UniProtKB-KW"/>
</dbReference>
<dbReference type="GO" id="GO:0003735">
    <property type="term" value="F:structural constituent of ribosome"/>
    <property type="evidence" value="ECO:0007669"/>
    <property type="project" value="InterPro"/>
</dbReference>
<dbReference type="GO" id="GO:0006412">
    <property type="term" value="P:translation"/>
    <property type="evidence" value="ECO:0007669"/>
    <property type="project" value="UniProtKB-UniRule"/>
</dbReference>
<dbReference type="Gene3D" id="1.20.5.1150">
    <property type="entry name" value="Ribosomal protein S8"/>
    <property type="match status" value="1"/>
</dbReference>
<dbReference type="HAMAP" id="MF_00358">
    <property type="entry name" value="Ribosomal_bS21"/>
    <property type="match status" value="1"/>
</dbReference>
<dbReference type="InterPro" id="IPR001911">
    <property type="entry name" value="Ribosomal_bS21"/>
</dbReference>
<dbReference type="InterPro" id="IPR038380">
    <property type="entry name" value="Ribosomal_bS21_sf"/>
</dbReference>
<dbReference type="NCBIfam" id="TIGR00030">
    <property type="entry name" value="S21p"/>
    <property type="match status" value="1"/>
</dbReference>
<dbReference type="PANTHER" id="PTHR21109">
    <property type="entry name" value="MITOCHONDRIAL 28S RIBOSOMAL PROTEIN S21"/>
    <property type="match status" value="1"/>
</dbReference>
<dbReference type="PANTHER" id="PTHR21109:SF0">
    <property type="entry name" value="SMALL RIBOSOMAL SUBUNIT PROTEIN BS21M"/>
    <property type="match status" value="1"/>
</dbReference>
<dbReference type="Pfam" id="PF01165">
    <property type="entry name" value="Ribosomal_S21"/>
    <property type="match status" value="1"/>
</dbReference>
<protein>
    <recommendedName>
        <fullName evidence="1">Small ribosomal subunit protein bS21A</fullName>
    </recommendedName>
    <alternativeName>
        <fullName evidence="3">30S ribosomal protein S21 1</fullName>
    </alternativeName>
</protein>
<keyword id="KW-0687">Ribonucleoprotein</keyword>
<keyword id="KW-0689">Ribosomal protein</keyword>
<evidence type="ECO:0000255" key="1">
    <source>
        <dbReference type="HAMAP-Rule" id="MF_00358"/>
    </source>
</evidence>
<evidence type="ECO:0000256" key="2">
    <source>
        <dbReference type="SAM" id="MobiDB-lite"/>
    </source>
</evidence>
<evidence type="ECO:0000305" key="3"/>
<comment type="similarity">
    <text evidence="1">Belongs to the bacterial ribosomal protein bS21 family.</text>
</comment>
<sequence>MQVLVRDNNVDQALRVLKKKMQREGLFREMKARSAFEKPSEKRAREKAEAIRRQRKLARKKLQREGLLPAPKKVLRPTR</sequence>
<accession>Q1MJR4</accession>
<feature type="chain" id="PRO_0000266746" description="Small ribosomal subunit protein bS21A">
    <location>
        <begin position="1"/>
        <end position="79"/>
    </location>
</feature>
<feature type="region of interest" description="Disordered" evidence="2">
    <location>
        <begin position="57"/>
        <end position="79"/>
    </location>
</feature>
<organism>
    <name type="scientific">Rhizobium johnstonii (strain DSM 114642 / LMG 32736 / 3841)</name>
    <name type="common">Rhizobium leguminosarum bv. viciae</name>
    <dbReference type="NCBI Taxonomy" id="216596"/>
    <lineage>
        <taxon>Bacteria</taxon>
        <taxon>Pseudomonadati</taxon>
        <taxon>Pseudomonadota</taxon>
        <taxon>Alphaproteobacteria</taxon>
        <taxon>Hyphomicrobiales</taxon>
        <taxon>Rhizobiaceae</taxon>
        <taxon>Rhizobium/Agrobacterium group</taxon>
        <taxon>Rhizobium</taxon>
        <taxon>Rhizobium johnstonii</taxon>
    </lineage>
</organism>